<dbReference type="EMBL" id="AA033366">
    <property type="status" value="NOT_ANNOTATED_CDS"/>
    <property type="molecule type" value="mRNA"/>
</dbReference>
<dbReference type="EMBL" id="AA049075">
    <property type="status" value="NOT_ANNOTATED_CDS"/>
    <property type="molecule type" value="mRNA"/>
</dbReference>
<dbReference type="EMBL" id="AA032894">
    <property type="status" value="NOT_ANNOTATED_CDS"/>
    <property type="molecule type" value="mRNA"/>
</dbReference>
<dbReference type="EMBL" id="AA051290">
    <property type="status" value="NOT_ANNOTATED_CDS"/>
    <property type="molecule type" value="mRNA"/>
</dbReference>
<dbReference type="EMBL" id="AA086918">
    <property type="status" value="NOT_ANNOTATED_CDS"/>
    <property type="molecule type" value="mRNA"/>
</dbReference>
<dbReference type="EMBL" id="AA032640">
    <property type="status" value="NOT_ANNOTATED_CDS"/>
    <property type="molecule type" value="mRNA"/>
</dbReference>
<dbReference type="EMBL" id="AK002593">
    <property type="protein sequence ID" value="BAB22214.1"/>
    <property type="molecule type" value="mRNA"/>
</dbReference>
<dbReference type="EMBL" id="BC024350">
    <property type="protein sequence ID" value="AAH24350.1"/>
    <property type="molecule type" value="mRNA"/>
</dbReference>
<dbReference type="CCDS" id="CCDS41096.1"/>
<dbReference type="RefSeq" id="NP_079655.1">
    <property type="nucleotide sequence ID" value="NM_025379.2"/>
</dbReference>
<dbReference type="PDB" id="7O37">
    <property type="method" value="EM"/>
    <property type="resolution" value="3.20 A"/>
    <property type="chains" value="k=25-80"/>
</dbReference>
<dbReference type="PDB" id="7O3C">
    <property type="method" value="EM"/>
    <property type="resolution" value="3.30 A"/>
    <property type="chains" value="k=25-80"/>
</dbReference>
<dbReference type="PDB" id="7O3E">
    <property type="method" value="EM"/>
    <property type="resolution" value="3.60 A"/>
    <property type="chains" value="k=25-80"/>
</dbReference>
<dbReference type="PDB" id="8PW5">
    <property type="method" value="EM"/>
    <property type="resolution" value="3.60 A"/>
    <property type="chains" value="k/x=1-80"/>
</dbReference>
<dbReference type="PDB" id="8PW6">
    <property type="method" value="EM"/>
    <property type="resolution" value="3.30 A"/>
    <property type="chains" value="x=1-80"/>
</dbReference>
<dbReference type="PDB" id="8PW7">
    <property type="method" value="EM"/>
    <property type="resolution" value="3.50 A"/>
    <property type="chains" value="x=1-80"/>
</dbReference>
<dbReference type="PDBsum" id="7O37"/>
<dbReference type="PDBsum" id="7O3C"/>
<dbReference type="PDBsum" id="7O3E"/>
<dbReference type="PDBsum" id="8PW5"/>
<dbReference type="PDBsum" id="8PW6"/>
<dbReference type="PDBsum" id="8PW7"/>
<dbReference type="EMDB" id="EMD-12702"/>
<dbReference type="EMDB" id="EMD-12703"/>
<dbReference type="EMDB" id="EMD-12705"/>
<dbReference type="EMDB" id="EMD-17989"/>
<dbReference type="EMDB" id="EMD-17990"/>
<dbReference type="EMDB" id="EMD-17991"/>
<dbReference type="SMR" id="P56393"/>
<dbReference type="BioGRID" id="211245">
    <property type="interactions" value="8"/>
</dbReference>
<dbReference type="CORUM" id="P56393"/>
<dbReference type="FunCoup" id="P56393">
    <property type="interactions" value="236"/>
</dbReference>
<dbReference type="STRING" id="10090.ENSMUSP00000033582"/>
<dbReference type="GlyGen" id="P56393">
    <property type="glycosylation" value="1 site, 1 O-linked glycan (1 site)"/>
</dbReference>
<dbReference type="iPTMnet" id="P56393"/>
<dbReference type="PhosphoSitePlus" id="P56393"/>
<dbReference type="jPOST" id="P56393"/>
<dbReference type="PaxDb" id="10090-ENSMUSP00000033582"/>
<dbReference type="PeptideAtlas" id="P56393"/>
<dbReference type="ProteomicsDB" id="283796"/>
<dbReference type="Pumba" id="P56393"/>
<dbReference type="TopDownProteomics" id="P56393"/>
<dbReference type="Antibodypedia" id="44006">
    <property type="antibodies" value="89 antibodies from 25 providers"/>
</dbReference>
<dbReference type="DNASU" id="66142"/>
<dbReference type="Ensembl" id="ENSMUST00000033582.5">
    <property type="protein sequence ID" value="ENSMUSP00000033582.5"/>
    <property type="gene ID" value="ENSMUSG00000031231.5"/>
</dbReference>
<dbReference type="GeneID" id="66142"/>
<dbReference type="KEGG" id="mmu:66142"/>
<dbReference type="UCSC" id="uc009ubk.1">
    <property type="organism name" value="mouse"/>
</dbReference>
<dbReference type="AGR" id="MGI:1913392"/>
<dbReference type="CTD" id="1349"/>
<dbReference type="MGI" id="MGI:1913392">
    <property type="gene designation" value="Cox7b"/>
</dbReference>
<dbReference type="VEuPathDB" id="HostDB:ENSMUSG00000031231"/>
<dbReference type="eggNOG" id="ENOG502S9DG">
    <property type="taxonomic scope" value="Eukaryota"/>
</dbReference>
<dbReference type="GeneTree" id="ENSGT00390000012178"/>
<dbReference type="HOGENOM" id="CLU_172656_0_0_1"/>
<dbReference type="InParanoid" id="P56393"/>
<dbReference type="OMA" id="CIQLPIA"/>
<dbReference type="OrthoDB" id="9937520at2759"/>
<dbReference type="PhylomeDB" id="P56393"/>
<dbReference type="TreeFam" id="TF105068"/>
<dbReference type="Reactome" id="R-MMU-5628897">
    <property type="pathway name" value="TP53 Regulates Metabolic Genes"/>
</dbReference>
<dbReference type="Reactome" id="R-MMU-611105">
    <property type="pathway name" value="Respiratory electron transport"/>
</dbReference>
<dbReference type="Reactome" id="R-MMU-9707564">
    <property type="pathway name" value="Cytoprotection by HMOX1"/>
</dbReference>
<dbReference type="Reactome" id="R-MMU-9864848">
    <property type="pathway name" value="Complex IV assembly"/>
</dbReference>
<dbReference type="UniPathway" id="UPA00705"/>
<dbReference type="BioGRID-ORCS" id="66142">
    <property type="hits" value="19 hits in 81 CRISPR screens"/>
</dbReference>
<dbReference type="ChiTaRS" id="Cox7b">
    <property type="organism name" value="mouse"/>
</dbReference>
<dbReference type="PRO" id="PR:P56393"/>
<dbReference type="Proteomes" id="UP000000589">
    <property type="component" value="Chromosome X"/>
</dbReference>
<dbReference type="RNAct" id="P56393">
    <property type="molecule type" value="protein"/>
</dbReference>
<dbReference type="Bgee" id="ENSMUSG00000031231">
    <property type="expression patterns" value="Expressed in interventricular septum and 140 other cell types or tissues"/>
</dbReference>
<dbReference type="ExpressionAtlas" id="P56393">
    <property type="expression patterns" value="baseline and differential"/>
</dbReference>
<dbReference type="GO" id="GO:0005743">
    <property type="term" value="C:mitochondrial inner membrane"/>
    <property type="evidence" value="ECO:0000314"/>
    <property type="project" value="UniProtKB"/>
</dbReference>
<dbReference type="GO" id="GO:0005739">
    <property type="term" value="C:mitochondrion"/>
    <property type="evidence" value="ECO:0007005"/>
    <property type="project" value="MGI"/>
</dbReference>
<dbReference type="GO" id="GO:0045277">
    <property type="term" value="C:respiratory chain complex IV"/>
    <property type="evidence" value="ECO:0000314"/>
    <property type="project" value="UniProtKB"/>
</dbReference>
<dbReference type="GO" id="GO:0007417">
    <property type="term" value="P:central nervous system development"/>
    <property type="evidence" value="ECO:0000250"/>
    <property type="project" value="UniProtKB"/>
</dbReference>
<dbReference type="GO" id="GO:0006123">
    <property type="term" value="P:mitochondrial electron transport, cytochrome c to oxygen"/>
    <property type="evidence" value="ECO:0007669"/>
    <property type="project" value="InterPro"/>
</dbReference>
<dbReference type="CDD" id="cd01403">
    <property type="entry name" value="Cyt_c_Oxidase_VIIb"/>
    <property type="match status" value="1"/>
</dbReference>
<dbReference type="FunFam" id="4.10.51.10:FF:000001">
    <property type="entry name" value="Cytochrome c oxidase subunit 7B, mitochondrial"/>
    <property type="match status" value="1"/>
</dbReference>
<dbReference type="Gene3D" id="4.10.51.10">
    <property type="entry name" value="Cytochrome C Oxidase, chain K"/>
    <property type="match status" value="1"/>
</dbReference>
<dbReference type="InterPro" id="IPR008433">
    <property type="entry name" value="Cyt_c_oxidase_suVIIB"/>
</dbReference>
<dbReference type="InterPro" id="IPR023272">
    <property type="entry name" value="Cyt_c_oxidase_suVIIB_dom_sf"/>
</dbReference>
<dbReference type="PANTHER" id="PTHR16716">
    <property type="entry name" value="CYTOCHROME C OXIDASE SUBUNIT 7B, MITOCHONDRIAL"/>
    <property type="match status" value="1"/>
</dbReference>
<dbReference type="PANTHER" id="PTHR16716:SF0">
    <property type="entry name" value="CYTOCHROME C OXIDASE SUBUNIT 7B, MITOCHONDRIAL"/>
    <property type="match status" value="1"/>
</dbReference>
<dbReference type="Pfam" id="PF05392">
    <property type="entry name" value="COX7B"/>
    <property type="match status" value="1"/>
</dbReference>
<dbReference type="SUPFAM" id="SSF81423">
    <property type="entry name" value="Mitochondrial cytochrome c oxidase subunit VIIb"/>
    <property type="match status" value="1"/>
</dbReference>
<accession>P56393</accession>
<evidence type="ECO:0000250" key="1">
    <source>
        <dbReference type="UniProtKB" id="P13183"/>
    </source>
</evidence>
<evidence type="ECO:0000250" key="2">
    <source>
        <dbReference type="UniProtKB" id="P24311"/>
    </source>
</evidence>
<evidence type="ECO:0000269" key="3">
    <source>
    </source>
</evidence>
<evidence type="ECO:0000269" key="4">
    <source>
    </source>
</evidence>
<evidence type="ECO:0000305" key="5"/>
<evidence type="ECO:0000312" key="6">
    <source>
        <dbReference type="PDB" id="7O3E"/>
    </source>
</evidence>
<evidence type="ECO:0007744" key="7">
    <source>
        <dbReference type="PDB" id="7O37"/>
    </source>
</evidence>
<evidence type="ECO:0007744" key="8">
    <source>
        <dbReference type="PDB" id="7O3C"/>
    </source>
</evidence>
<evidence type="ECO:0007744" key="9">
    <source>
        <dbReference type="PDB" id="8PW5"/>
    </source>
</evidence>
<evidence type="ECO:0007829" key="10">
    <source>
        <dbReference type="PDB" id="7O37"/>
    </source>
</evidence>
<evidence type="ECO:0007829" key="11">
    <source>
        <dbReference type="PDB" id="7O3C"/>
    </source>
</evidence>
<organism>
    <name type="scientific">Mus musculus</name>
    <name type="common">Mouse</name>
    <dbReference type="NCBI Taxonomy" id="10090"/>
    <lineage>
        <taxon>Eukaryota</taxon>
        <taxon>Metazoa</taxon>
        <taxon>Chordata</taxon>
        <taxon>Craniata</taxon>
        <taxon>Vertebrata</taxon>
        <taxon>Euteleostomi</taxon>
        <taxon>Mammalia</taxon>
        <taxon>Eutheria</taxon>
        <taxon>Euarchontoglires</taxon>
        <taxon>Glires</taxon>
        <taxon>Rodentia</taxon>
        <taxon>Myomorpha</taxon>
        <taxon>Muroidea</taxon>
        <taxon>Muridae</taxon>
        <taxon>Murinae</taxon>
        <taxon>Mus</taxon>
        <taxon>Mus</taxon>
    </lineage>
</organism>
<comment type="function">
    <text evidence="1 2 3 4">Component of the cytochrome c oxidase, the last enzyme in the mitochondrial electron transport chain which drives oxidative phosphorylation (PubMed:34616041, PubMed:38575788). The respiratory chain contains 3 multisubunit complexes succinate dehydrogenase (complex II, CII), ubiquinol-cytochrome c oxidoreductase (cytochrome b-c1 complex, complex III, CIII) and cytochrome c oxidase (complex IV, CIV), that cooperate to transfer electrons derived from NADH and succinate to molecular oxygen, creating an electrochemical gradient over the inner membrane that drives transmembrane transport and the ATP synthase (PubMed:34616041, PubMed:38575788). Cytochrome c oxidase is the component of the respiratory chain that catalyzes the reduction of oxygen to water. Electrons originating from reduced cytochrome c in the intermembrane space (IMS) are transferred via the dinuclear copper A center (CU(A)) of subunit 2 and heme A of subunit 1 to the active site in subunit 1, a binuclear center (BNC) formed by heme A3 and copper B (CU(B)). The BNC reduces molecular oxygen to 2 water molecules using 4 electrons from cytochrome c in the IMS and 4 protons from the mitochondrial matrix (By similarity). Plays a role in proper central nervous system (CNS) development in vertebrates (By similarity).</text>
</comment>
<comment type="pathway">
    <text evidence="3 4">Energy metabolism; oxidative phosphorylation.</text>
</comment>
<comment type="subunit">
    <text evidence="3 4">Component of the cytochrome c oxidase (complex IV, CIV), a multisubunit enzyme composed of 14 subunits (PubMed:34616041, PubMed:38575788). The complex is composed of a catalytic core of 3 subunits MT-CO1, MT-CO2 and MT-CO3, encoded in the mitochondrial DNA, and 11 supernumerary subunits COX4I, COX5A, COX5B, COX6A, COX6B, COX6C, COX7A, COX7B, COX7C, COX8 and NDUFA4, which are encoded in the nuclear genome (PubMed:34616041, PubMed:38575788). The complex exists as a monomer or a dimer and forms supercomplexes (SCs) in the inner mitochondrial membrane with NADH-ubiquinone oxidoreductase (complex I, CI) and ubiquinol-cytochrome c oxidoreductase (cytochrome b-c1 complex, complex III, CIII), resulting in different assemblies (supercomplex SCI(1)III(2)IV(1) and megacomplex MCI(2)III(2)IV(2)) (PubMed:34616041, PubMed:38575788).</text>
</comment>
<comment type="subcellular location">
    <subcellularLocation>
        <location evidence="3 4">Mitochondrion inner membrane</location>
        <topology evidence="3">Single-pass membrane protein</topology>
    </subcellularLocation>
</comment>
<comment type="similarity">
    <text evidence="5">Belongs to the cytochrome c oxidase VIIb family.</text>
</comment>
<gene>
    <name type="primary">Cox7b</name>
</gene>
<keyword id="KW-0002">3D-structure</keyword>
<keyword id="KW-0472">Membrane</keyword>
<keyword id="KW-0496">Mitochondrion</keyword>
<keyword id="KW-0999">Mitochondrion inner membrane</keyword>
<keyword id="KW-1185">Reference proteome</keyword>
<keyword id="KW-0809">Transit peptide</keyword>
<keyword id="KW-0812">Transmembrane</keyword>
<keyword id="KW-1133">Transmembrane helix</keyword>
<reference key="1">
    <citation type="submission" date="1996-08" db="EMBL/GenBank/DDBJ databases">
        <authorList>
            <person name="Marra M."/>
            <person name="Hillier L."/>
            <person name="Allen M."/>
            <person name="Bowles M."/>
            <person name="Dietrich N."/>
            <person name="Dubuque T."/>
            <person name="Geisel S."/>
            <person name="Kucaba T."/>
            <person name="Lacy M."/>
            <person name="Le M."/>
            <person name="Martin J."/>
            <person name="Morris M."/>
            <person name="Schellenberg K."/>
            <person name="Steptoe M."/>
            <person name="Tan F."/>
            <person name="Underwood K."/>
            <person name="Moore B."/>
            <person name="Theising B."/>
            <person name="Wylie T."/>
            <person name="Lennon G."/>
            <person name="Soares B."/>
            <person name="Wilson R."/>
            <person name="Waterston R."/>
        </authorList>
    </citation>
    <scope>NUCLEOTIDE SEQUENCE [MRNA]</scope>
</reference>
<reference key="2">
    <citation type="journal article" date="2005" name="Science">
        <title>The transcriptional landscape of the mammalian genome.</title>
        <authorList>
            <person name="Carninci P."/>
            <person name="Kasukawa T."/>
            <person name="Katayama S."/>
            <person name="Gough J."/>
            <person name="Frith M.C."/>
            <person name="Maeda N."/>
            <person name="Oyama R."/>
            <person name="Ravasi T."/>
            <person name="Lenhard B."/>
            <person name="Wells C."/>
            <person name="Kodzius R."/>
            <person name="Shimokawa K."/>
            <person name="Bajic V.B."/>
            <person name="Brenner S.E."/>
            <person name="Batalov S."/>
            <person name="Forrest A.R."/>
            <person name="Zavolan M."/>
            <person name="Davis M.J."/>
            <person name="Wilming L.G."/>
            <person name="Aidinis V."/>
            <person name="Allen J.E."/>
            <person name="Ambesi-Impiombato A."/>
            <person name="Apweiler R."/>
            <person name="Aturaliya R.N."/>
            <person name="Bailey T.L."/>
            <person name="Bansal M."/>
            <person name="Baxter L."/>
            <person name="Beisel K.W."/>
            <person name="Bersano T."/>
            <person name="Bono H."/>
            <person name="Chalk A.M."/>
            <person name="Chiu K.P."/>
            <person name="Choudhary V."/>
            <person name="Christoffels A."/>
            <person name="Clutterbuck D.R."/>
            <person name="Crowe M.L."/>
            <person name="Dalla E."/>
            <person name="Dalrymple B.P."/>
            <person name="de Bono B."/>
            <person name="Della Gatta G."/>
            <person name="di Bernardo D."/>
            <person name="Down T."/>
            <person name="Engstrom P."/>
            <person name="Fagiolini M."/>
            <person name="Faulkner G."/>
            <person name="Fletcher C.F."/>
            <person name="Fukushima T."/>
            <person name="Furuno M."/>
            <person name="Futaki S."/>
            <person name="Gariboldi M."/>
            <person name="Georgii-Hemming P."/>
            <person name="Gingeras T.R."/>
            <person name="Gojobori T."/>
            <person name="Green R.E."/>
            <person name="Gustincich S."/>
            <person name="Harbers M."/>
            <person name="Hayashi Y."/>
            <person name="Hensch T.K."/>
            <person name="Hirokawa N."/>
            <person name="Hill D."/>
            <person name="Huminiecki L."/>
            <person name="Iacono M."/>
            <person name="Ikeo K."/>
            <person name="Iwama A."/>
            <person name="Ishikawa T."/>
            <person name="Jakt M."/>
            <person name="Kanapin A."/>
            <person name="Katoh M."/>
            <person name="Kawasawa Y."/>
            <person name="Kelso J."/>
            <person name="Kitamura H."/>
            <person name="Kitano H."/>
            <person name="Kollias G."/>
            <person name="Krishnan S.P."/>
            <person name="Kruger A."/>
            <person name="Kummerfeld S.K."/>
            <person name="Kurochkin I.V."/>
            <person name="Lareau L.F."/>
            <person name="Lazarevic D."/>
            <person name="Lipovich L."/>
            <person name="Liu J."/>
            <person name="Liuni S."/>
            <person name="McWilliam S."/>
            <person name="Madan Babu M."/>
            <person name="Madera M."/>
            <person name="Marchionni L."/>
            <person name="Matsuda H."/>
            <person name="Matsuzawa S."/>
            <person name="Miki H."/>
            <person name="Mignone F."/>
            <person name="Miyake S."/>
            <person name="Morris K."/>
            <person name="Mottagui-Tabar S."/>
            <person name="Mulder N."/>
            <person name="Nakano N."/>
            <person name="Nakauchi H."/>
            <person name="Ng P."/>
            <person name="Nilsson R."/>
            <person name="Nishiguchi S."/>
            <person name="Nishikawa S."/>
            <person name="Nori F."/>
            <person name="Ohara O."/>
            <person name="Okazaki Y."/>
            <person name="Orlando V."/>
            <person name="Pang K.C."/>
            <person name="Pavan W.J."/>
            <person name="Pavesi G."/>
            <person name="Pesole G."/>
            <person name="Petrovsky N."/>
            <person name="Piazza S."/>
            <person name="Reed J."/>
            <person name="Reid J.F."/>
            <person name="Ring B.Z."/>
            <person name="Ringwald M."/>
            <person name="Rost B."/>
            <person name="Ruan Y."/>
            <person name="Salzberg S.L."/>
            <person name="Sandelin A."/>
            <person name="Schneider C."/>
            <person name="Schoenbach C."/>
            <person name="Sekiguchi K."/>
            <person name="Semple C.A."/>
            <person name="Seno S."/>
            <person name="Sessa L."/>
            <person name="Sheng Y."/>
            <person name="Shibata Y."/>
            <person name="Shimada H."/>
            <person name="Shimada K."/>
            <person name="Silva D."/>
            <person name="Sinclair B."/>
            <person name="Sperling S."/>
            <person name="Stupka E."/>
            <person name="Sugiura K."/>
            <person name="Sultana R."/>
            <person name="Takenaka Y."/>
            <person name="Taki K."/>
            <person name="Tammoja K."/>
            <person name="Tan S.L."/>
            <person name="Tang S."/>
            <person name="Taylor M.S."/>
            <person name="Tegner J."/>
            <person name="Teichmann S.A."/>
            <person name="Ueda H.R."/>
            <person name="van Nimwegen E."/>
            <person name="Verardo R."/>
            <person name="Wei C.L."/>
            <person name="Yagi K."/>
            <person name="Yamanishi H."/>
            <person name="Zabarovsky E."/>
            <person name="Zhu S."/>
            <person name="Zimmer A."/>
            <person name="Hide W."/>
            <person name="Bult C."/>
            <person name="Grimmond S.M."/>
            <person name="Teasdale R.D."/>
            <person name="Liu E.T."/>
            <person name="Brusic V."/>
            <person name="Quackenbush J."/>
            <person name="Wahlestedt C."/>
            <person name="Mattick J.S."/>
            <person name="Hume D.A."/>
            <person name="Kai C."/>
            <person name="Sasaki D."/>
            <person name="Tomaru Y."/>
            <person name="Fukuda S."/>
            <person name="Kanamori-Katayama M."/>
            <person name="Suzuki M."/>
            <person name="Aoki J."/>
            <person name="Arakawa T."/>
            <person name="Iida J."/>
            <person name="Imamura K."/>
            <person name="Itoh M."/>
            <person name="Kato T."/>
            <person name="Kawaji H."/>
            <person name="Kawagashira N."/>
            <person name="Kawashima T."/>
            <person name="Kojima M."/>
            <person name="Kondo S."/>
            <person name="Konno H."/>
            <person name="Nakano K."/>
            <person name="Ninomiya N."/>
            <person name="Nishio T."/>
            <person name="Okada M."/>
            <person name="Plessy C."/>
            <person name="Shibata K."/>
            <person name="Shiraki T."/>
            <person name="Suzuki S."/>
            <person name="Tagami M."/>
            <person name="Waki K."/>
            <person name="Watahiki A."/>
            <person name="Okamura-Oho Y."/>
            <person name="Suzuki H."/>
            <person name="Kawai J."/>
            <person name="Hayashizaki Y."/>
        </authorList>
    </citation>
    <scope>NUCLEOTIDE SEQUENCE [LARGE SCALE MRNA]</scope>
    <source>
        <strain>C57BL/6J</strain>
        <tissue>Kidney</tissue>
    </source>
</reference>
<reference key="3">
    <citation type="journal article" date="2004" name="Genome Res.">
        <title>The status, quality, and expansion of the NIH full-length cDNA project: the Mammalian Gene Collection (MGC).</title>
        <authorList>
            <consortium name="The MGC Project Team"/>
        </authorList>
    </citation>
    <scope>NUCLEOTIDE SEQUENCE [LARGE SCALE MRNA]</scope>
    <source>
        <strain>FVB/N</strain>
        <tissue>Colon</tissue>
    </source>
</reference>
<reference evidence="6 7 8" key="4">
    <citation type="journal article" date="2021" name="Nature">
        <title>Structure and assembly of the mammalian mitochondrial supercomplex CIII2CIV.</title>
        <authorList>
            <person name="Vercellino I."/>
            <person name="Sazanov L.A."/>
        </authorList>
    </citation>
    <scope>STRUCTURE BY ELECTRON MICROSCOPY (3.20 ANGSTROMS) IN COMPLEX WITH MITOCHONDRIAL RESPIRATORY SUPERCOMPLEX</scope>
    <scope>FUNCTION</scope>
    <scope>PATHWAY</scope>
    <scope>SUBCELLULAR LOCATION</scope>
    <scope>SUBUNIT</scope>
</reference>
<reference evidence="9" key="5">
    <citation type="journal article" date="2024" name="Nat. Struct. Mol. Biol.">
        <title>SCAF1 drives the compositional diversity of mammalian respirasomes.</title>
        <authorList>
            <person name="Vercellino I."/>
            <person name="Sazanov L.A."/>
        </authorList>
    </citation>
    <scope>STRUCTURE BY ELECTRON MICROSCOPY (3.60 ANGSTROMS) IN COMPLEX WITH MITOCHONDRIAL RESPIRATORY SUPERCOMPLEX</scope>
    <scope>FUNCTION</scope>
    <scope>SUBCELLULAR LOCATION</scope>
    <scope>SUBUNIT</scope>
</reference>
<protein>
    <recommendedName>
        <fullName>Cytochrome c oxidase subunit 7B, mitochondrial</fullName>
    </recommendedName>
    <alternativeName>
        <fullName>Cytochrome c oxidase polypeptide VIIb</fullName>
    </alternativeName>
</protein>
<name>COX7B_MOUSE</name>
<feature type="transit peptide" description="Mitochondrion" evidence="1">
    <location>
        <begin position="1"/>
        <end position="24"/>
    </location>
</feature>
<feature type="chain" id="PRO_0000006159" description="Cytochrome c oxidase subunit 7B, mitochondrial">
    <location>
        <begin position="25"/>
        <end position="80"/>
    </location>
</feature>
<feature type="topological domain" description="Mitochondrial matrix" evidence="3 7 8">
    <location>
        <begin position="25"/>
        <end position="39"/>
    </location>
</feature>
<feature type="transmembrane region" description="Helical" evidence="3 7 8">
    <location>
        <begin position="40"/>
        <end position="60"/>
    </location>
</feature>
<feature type="topological domain" description="Mitochondrial intermembrane" evidence="3 7 8">
    <location>
        <begin position="61"/>
        <end position="80"/>
    </location>
</feature>
<feature type="helix" evidence="10">
    <location>
        <begin position="34"/>
        <end position="58"/>
    </location>
</feature>
<feature type="strand" evidence="11">
    <location>
        <begin position="69"/>
        <end position="72"/>
    </location>
</feature>
<sequence>MLPLAKNALSRLQVRSIQQVVARQSHQKRAPSFHDKYGNAILAGGAIFCVSTWTYTATQIGIEWNMSPVGRVTPKEWRDQ</sequence>
<proteinExistence type="evidence at protein level"/>